<dbReference type="EMBL" id="AC007168">
    <property type="protein sequence ID" value="AAD23614.1"/>
    <property type="molecule type" value="Genomic_DNA"/>
</dbReference>
<dbReference type="EMBL" id="CP002685">
    <property type="protein sequence ID" value="AEC07288.1"/>
    <property type="molecule type" value="Genomic_DNA"/>
</dbReference>
<dbReference type="PIR" id="H84610">
    <property type="entry name" value="H84610"/>
</dbReference>
<dbReference type="RefSeq" id="NP_179816.1">
    <property type="nucleotide sequence ID" value="NM_127794.2"/>
</dbReference>
<dbReference type="SMR" id="Q9SID8"/>
<dbReference type="FunCoup" id="Q9SID8">
    <property type="interactions" value="1722"/>
</dbReference>
<dbReference type="STRING" id="3702.Q9SID8"/>
<dbReference type="iPTMnet" id="Q9SID8"/>
<dbReference type="PaxDb" id="3702-AT2G22290.1"/>
<dbReference type="ProteomicsDB" id="235094"/>
<dbReference type="EnsemblPlants" id="AT2G22290.1">
    <property type="protein sequence ID" value="AT2G22290.1"/>
    <property type="gene ID" value="AT2G22290"/>
</dbReference>
<dbReference type="GeneID" id="816761"/>
<dbReference type="Gramene" id="AT2G22290.1">
    <property type="protein sequence ID" value="AT2G22290.1"/>
    <property type="gene ID" value="AT2G22290"/>
</dbReference>
<dbReference type="KEGG" id="ath:AT2G22290"/>
<dbReference type="Araport" id="AT2G22290"/>
<dbReference type="TAIR" id="AT2G22290">
    <property type="gene designation" value="RABH1D"/>
</dbReference>
<dbReference type="eggNOG" id="KOG0094">
    <property type="taxonomic scope" value="Eukaryota"/>
</dbReference>
<dbReference type="HOGENOM" id="CLU_041217_10_2_1"/>
<dbReference type="InParanoid" id="Q9SID8"/>
<dbReference type="OMA" id="XIDIKLE"/>
<dbReference type="OrthoDB" id="63533at2759"/>
<dbReference type="PhylomeDB" id="Q9SID8"/>
<dbReference type="PRO" id="PR:Q9SID8"/>
<dbReference type="Proteomes" id="UP000006548">
    <property type="component" value="Chromosome 2"/>
</dbReference>
<dbReference type="ExpressionAtlas" id="Q9SID8">
    <property type="expression patterns" value="baseline and differential"/>
</dbReference>
<dbReference type="GO" id="GO:0000139">
    <property type="term" value="C:Golgi membrane"/>
    <property type="evidence" value="ECO:0007669"/>
    <property type="project" value="UniProtKB-SubCell"/>
</dbReference>
<dbReference type="GO" id="GO:0005739">
    <property type="term" value="C:mitochondrion"/>
    <property type="evidence" value="ECO:0007005"/>
    <property type="project" value="TAIR"/>
</dbReference>
<dbReference type="GO" id="GO:0005773">
    <property type="term" value="C:vacuole"/>
    <property type="evidence" value="ECO:0007005"/>
    <property type="project" value="TAIR"/>
</dbReference>
<dbReference type="GO" id="GO:0005525">
    <property type="term" value="F:GTP binding"/>
    <property type="evidence" value="ECO:0007669"/>
    <property type="project" value="UniProtKB-KW"/>
</dbReference>
<dbReference type="GO" id="GO:0003924">
    <property type="term" value="F:GTPase activity"/>
    <property type="evidence" value="ECO:0007669"/>
    <property type="project" value="InterPro"/>
</dbReference>
<dbReference type="GO" id="GO:0015031">
    <property type="term" value="P:protein transport"/>
    <property type="evidence" value="ECO:0007669"/>
    <property type="project" value="UniProtKB-KW"/>
</dbReference>
<dbReference type="GO" id="GO:0016192">
    <property type="term" value="P:vesicle-mediated transport"/>
    <property type="evidence" value="ECO:0007669"/>
    <property type="project" value="UniProtKB-KW"/>
</dbReference>
<dbReference type="CDD" id="cd01861">
    <property type="entry name" value="Rab6"/>
    <property type="match status" value="1"/>
</dbReference>
<dbReference type="FunFam" id="3.40.50.300:FF:002888">
    <property type="entry name" value="ras-related protein RABH1e isoform X2"/>
    <property type="match status" value="1"/>
</dbReference>
<dbReference type="Gene3D" id="3.40.50.300">
    <property type="entry name" value="P-loop containing nucleotide triphosphate hydrolases"/>
    <property type="match status" value="1"/>
</dbReference>
<dbReference type="InterPro" id="IPR027417">
    <property type="entry name" value="P-loop_NTPase"/>
</dbReference>
<dbReference type="InterPro" id="IPR050227">
    <property type="entry name" value="Rab"/>
</dbReference>
<dbReference type="InterPro" id="IPR005225">
    <property type="entry name" value="Small_GTP-bd"/>
</dbReference>
<dbReference type="InterPro" id="IPR001806">
    <property type="entry name" value="Small_GTPase"/>
</dbReference>
<dbReference type="NCBIfam" id="TIGR00231">
    <property type="entry name" value="small_GTP"/>
    <property type="match status" value="1"/>
</dbReference>
<dbReference type="PANTHER" id="PTHR47977">
    <property type="entry name" value="RAS-RELATED PROTEIN RAB"/>
    <property type="match status" value="1"/>
</dbReference>
<dbReference type="Pfam" id="PF00071">
    <property type="entry name" value="Ras"/>
    <property type="match status" value="1"/>
</dbReference>
<dbReference type="PRINTS" id="PR00449">
    <property type="entry name" value="RASTRNSFRMNG"/>
</dbReference>
<dbReference type="SMART" id="SM00175">
    <property type="entry name" value="RAB"/>
    <property type="match status" value="1"/>
</dbReference>
<dbReference type="SMART" id="SM00176">
    <property type="entry name" value="RAN"/>
    <property type="match status" value="1"/>
</dbReference>
<dbReference type="SMART" id="SM00173">
    <property type="entry name" value="RAS"/>
    <property type="match status" value="1"/>
</dbReference>
<dbReference type="SMART" id="SM00174">
    <property type="entry name" value="RHO"/>
    <property type="match status" value="1"/>
</dbReference>
<dbReference type="SUPFAM" id="SSF52540">
    <property type="entry name" value="P-loop containing nucleoside triphosphate hydrolases"/>
    <property type="match status" value="1"/>
</dbReference>
<dbReference type="PROSITE" id="PS51419">
    <property type="entry name" value="RAB"/>
    <property type="match status" value="1"/>
</dbReference>
<comment type="function">
    <text evidence="1">Protein transport. Regulator of membrane traffic from the Golgi apparatus towards the endoplasmic reticulum (ER) (By similarity).</text>
</comment>
<comment type="subcellular location">
    <subcellularLocation>
        <location evidence="2">Golgi apparatus membrane</location>
        <topology evidence="2">Lipid-anchor</topology>
    </subcellularLocation>
</comment>
<comment type="similarity">
    <text evidence="2">Belongs to the small GTPase superfamily. Rab family.</text>
</comment>
<reference key="1">
    <citation type="journal article" date="1999" name="Nature">
        <title>Sequence and analysis of chromosome 2 of the plant Arabidopsis thaliana.</title>
        <authorList>
            <person name="Lin X."/>
            <person name="Kaul S."/>
            <person name="Rounsley S.D."/>
            <person name="Shea T.P."/>
            <person name="Benito M.-I."/>
            <person name="Town C.D."/>
            <person name="Fujii C.Y."/>
            <person name="Mason T.M."/>
            <person name="Bowman C.L."/>
            <person name="Barnstead M.E."/>
            <person name="Feldblyum T.V."/>
            <person name="Buell C.R."/>
            <person name="Ketchum K.A."/>
            <person name="Lee J.J."/>
            <person name="Ronning C.M."/>
            <person name="Koo H.L."/>
            <person name="Moffat K.S."/>
            <person name="Cronin L.A."/>
            <person name="Shen M."/>
            <person name="Pai G."/>
            <person name="Van Aken S."/>
            <person name="Umayam L."/>
            <person name="Tallon L.J."/>
            <person name="Gill J.E."/>
            <person name="Adams M.D."/>
            <person name="Carrera A.J."/>
            <person name="Creasy T.H."/>
            <person name="Goodman H.M."/>
            <person name="Somerville C.R."/>
            <person name="Copenhaver G.P."/>
            <person name="Preuss D."/>
            <person name="Nierman W.C."/>
            <person name="White O."/>
            <person name="Eisen J.A."/>
            <person name="Salzberg S.L."/>
            <person name="Fraser C.M."/>
            <person name="Venter J.C."/>
        </authorList>
    </citation>
    <scope>NUCLEOTIDE SEQUENCE [LARGE SCALE GENOMIC DNA]</scope>
    <source>
        <strain>cv. Columbia</strain>
    </source>
</reference>
<reference key="2">
    <citation type="journal article" date="2017" name="Plant J.">
        <title>Araport11: a complete reannotation of the Arabidopsis thaliana reference genome.</title>
        <authorList>
            <person name="Cheng C.Y."/>
            <person name="Krishnakumar V."/>
            <person name="Chan A.P."/>
            <person name="Thibaud-Nissen F."/>
            <person name="Schobel S."/>
            <person name="Town C.D."/>
        </authorList>
    </citation>
    <scope>GENOME REANNOTATION</scope>
    <source>
        <strain>cv. Columbia</strain>
    </source>
</reference>
<reference key="3">
    <citation type="journal article" date="2003" name="Plant Physiol.">
        <title>Analysis of the small GTPase gene superfamily of Arabidopsis.</title>
        <authorList>
            <person name="Vernoud V."/>
            <person name="Horton A.C."/>
            <person name="Yang Z."/>
            <person name="Nielsen E."/>
        </authorList>
    </citation>
    <scope>GENE FAMILY</scope>
    <scope>NOMENCLATURE</scope>
</reference>
<protein>
    <recommendedName>
        <fullName>Ras-related protein RABH1d</fullName>
        <shortName>AtRABH1d</shortName>
    </recommendedName>
</protein>
<feature type="chain" id="PRO_0000407333" description="Ras-related protein RABH1d">
    <location>
        <begin position="1"/>
        <end position="207"/>
    </location>
</feature>
<feature type="short sequence motif" description="Effector region" evidence="1">
    <location>
        <begin position="38"/>
        <end position="46"/>
    </location>
</feature>
<feature type="binding site" evidence="1">
    <location>
        <begin position="16"/>
        <end position="23"/>
    </location>
    <ligand>
        <name>GTP</name>
        <dbReference type="ChEBI" id="CHEBI:37565"/>
    </ligand>
</feature>
<feature type="binding site" evidence="1">
    <location>
        <begin position="64"/>
        <end position="68"/>
    </location>
    <ligand>
        <name>GTP</name>
        <dbReference type="ChEBI" id="CHEBI:37565"/>
    </ligand>
</feature>
<feature type="binding site" evidence="1">
    <location>
        <begin position="122"/>
        <end position="125"/>
    </location>
    <ligand>
        <name>GTP</name>
        <dbReference type="ChEBI" id="CHEBI:37565"/>
    </ligand>
</feature>
<feature type="binding site" evidence="1">
    <location>
        <begin position="152"/>
        <end position="153"/>
    </location>
    <ligand>
        <name>GTP</name>
        <dbReference type="ChEBI" id="CHEBI:37565"/>
    </ligand>
</feature>
<feature type="modified residue" description="Cysteine methyl ester" evidence="1">
    <location>
        <position position="207"/>
    </location>
</feature>
<feature type="lipid moiety-binding region" description="S-geranylgeranyl cysteine" evidence="1">
    <location>
        <position position="205"/>
    </location>
</feature>
<feature type="lipid moiety-binding region" description="S-geranylgeranyl cysteine" evidence="1">
    <location>
        <position position="207"/>
    </location>
</feature>
<evidence type="ECO:0000250" key="1"/>
<evidence type="ECO:0000305" key="2"/>
<proteinExistence type="inferred from homology"/>
<keyword id="KW-0931">ER-Golgi transport</keyword>
<keyword id="KW-0333">Golgi apparatus</keyword>
<keyword id="KW-0342">GTP-binding</keyword>
<keyword id="KW-0449">Lipoprotein</keyword>
<keyword id="KW-0472">Membrane</keyword>
<keyword id="KW-0488">Methylation</keyword>
<keyword id="KW-0547">Nucleotide-binding</keyword>
<keyword id="KW-0636">Prenylation</keyword>
<keyword id="KW-0653">Protein transport</keyword>
<keyword id="KW-1185">Reference proteome</keyword>
<keyword id="KW-0813">Transport</keyword>
<name>RAH1D_ARATH</name>
<organism>
    <name type="scientific">Arabidopsis thaliana</name>
    <name type="common">Mouse-ear cress</name>
    <dbReference type="NCBI Taxonomy" id="3702"/>
    <lineage>
        <taxon>Eukaryota</taxon>
        <taxon>Viridiplantae</taxon>
        <taxon>Streptophyta</taxon>
        <taxon>Embryophyta</taxon>
        <taxon>Tracheophyta</taxon>
        <taxon>Spermatophyta</taxon>
        <taxon>Magnoliopsida</taxon>
        <taxon>eudicotyledons</taxon>
        <taxon>Gunneridae</taxon>
        <taxon>Pentapetalae</taxon>
        <taxon>rosids</taxon>
        <taxon>malvids</taxon>
        <taxon>Brassicales</taxon>
        <taxon>Brassicaceae</taxon>
        <taxon>Camelineae</taxon>
        <taxon>Arabidopsis</taxon>
    </lineage>
</organism>
<sequence length="207" mass="23112">MASVSPLAKYKLVFLGDQSVGKTSIITRFMYDKFDTTYQATIGIDFLSKTMYLEDRTVRLQLWDTAGQERFRSLIPSYIRDSSVAVVVYDVANRLSFLNTSKWIEEVRNERAGDVIIVLVGNKTDLVEKRQVSIEEGDSKGREYGVMFIETSAKAGFNIKPLFRKIAAALPGMESYSNTKNEDMVDVNLKPTSNSSQGDQQGGACSC</sequence>
<gene>
    <name type="primary">RABH1D</name>
    <name type="ordered locus">At2g22290</name>
    <name type="ORF">T26C19.5</name>
</gene>
<accession>Q9SID8</accession>